<gene>
    <name evidence="1" type="primary">Nop17l</name>
    <name evidence="1" type="synonym">Ppi20</name>
    <name type="ORF">CG1553</name>
</gene>
<evidence type="ECO:0000255" key="1">
    <source>
        <dbReference type="HAMAP-Rule" id="MF_03069"/>
    </source>
</evidence>
<evidence type="ECO:0000256" key="2">
    <source>
        <dbReference type="SAM" id="MobiDB-lite"/>
    </source>
</evidence>
<evidence type="ECO:0000269" key="3">
    <source>
    </source>
</evidence>
<evidence type="ECO:0000269" key="4">
    <source>
    </source>
</evidence>
<evidence type="ECO:0000305" key="5"/>
<sequence length="834" mass="94774">MSASRSRNKQSKLCDDERLDISRDEFNRFQEAFGKEEFRKLFFDYVDEIQDPENRKIYESEITQLEKERGVEVRFIHPKPGFVIKTALDGELKCFINIASCEEIQRPKNEVATDPSSGSRGLSWSIPMAQTTSRDDFDAKNNHCKVFDVVFHPDALHLAMRNKQFRQCLIDTALDAIEREYKVSLDRANLKFPKLDYKGIPRPTVIRKMADNPTAEEQEPHPLAHMFPTKPPAPGKQEPRVLPMKTKPSPVPEFTVPRYTIKHSHDVDLSEYTDELDAKLHVTVPRSLVVEIELPLLRSTAECQLDVTSKSIYLFSERQGAKYRLKLDLPFIVDDKAGRARFDTDMRRLSITLPVVRKSIQEQAQMHETLRHFSREDSGVELHSNSESPVEEDPDGELSDSKADISETSSPSVAPANSPFLKSSVHYQLPSKFDCNVLDNVMAFVLHVPNVQPDSIEQLREQRSLHLKFATIGSGYYPTHYAFYVELSAEHEDSSIESAEAEAWDNNVVLKLCLNSQSETPASYLAGLDATELKEYPVHGQYHVKSKGKVNAKKDNAPLDVKFERNQEGHALKVTIRPGTKEEEEDKENQDQEPESDQQQQQQVQNKKPGKKQRKKNKKERSLSESACADMILQEPLAKTNELQPRATFKLPPQRKQRSYSECNDSTGRSHRGILKRFSRYGPRPSMSDSWSSIDDSSSYSCSVDASGTSLFSQSFGGIPEEDRSDAGLSESCKKTVRFNDHIMKQVFRLDSSILGQRKKNQKRRDLKLRAQQRRLSEGDSVDYEETRGSALKQEENPSRNCNDSGLDLTGAAGAHSNNNESDAKNTMMFEMDD</sequence>
<keyword id="KW-0963">Cytoplasm</keyword>
<keyword id="KW-0597">Phosphoprotein</keyword>
<keyword id="KW-1185">Reference proteome</keyword>
<dbReference type="EMBL" id="AM262814">
    <property type="protein sequence ID" value="CAK18654.1"/>
    <property type="molecule type" value="mRNA"/>
</dbReference>
<dbReference type="EMBL" id="AE013599">
    <property type="protein sequence ID" value="AAF59190.1"/>
    <property type="molecule type" value="Genomic_DNA"/>
</dbReference>
<dbReference type="EMBL" id="AE013599">
    <property type="protein sequence ID" value="AAM68861.1"/>
    <property type="molecule type" value="Genomic_DNA"/>
</dbReference>
<dbReference type="EMBL" id="AE013599">
    <property type="protein sequence ID" value="AAM68862.1"/>
    <property type="molecule type" value="Genomic_DNA"/>
</dbReference>
<dbReference type="EMBL" id="AY075579">
    <property type="protein sequence ID" value="AAL68384.1"/>
    <property type="molecule type" value="mRNA"/>
</dbReference>
<dbReference type="EMBL" id="BT099649">
    <property type="protein sequence ID" value="ACV21069.1"/>
    <property type="molecule type" value="mRNA"/>
</dbReference>
<dbReference type="EMBL" id="BT133346">
    <property type="protein sequence ID" value="AFF57511.1"/>
    <property type="molecule type" value="mRNA"/>
</dbReference>
<dbReference type="RefSeq" id="NP_610324.2">
    <property type="nucleotide sequence ID" value="NM_136480.3"/>
</dbReference>
<dbReference type="RefSeq" id="NP_724604.1">
    <property type="nucleotide sequence ID" value="NM_165557.2"/>
</dbReference>
<dbReference type="RefSeq" id="NP_724605.1">
    <property type="nucleotide sequence ID" value="NM_165558.2"/>
</dbReference>
<dbReference type="SMR" id="Q0E9G3"/>
<dbReference type="BioGRID" id="61597">
    <property type="interactions" value="7"/>
</dbReference>
<dbReference type="FunCoup" id="Q0E9G3">
    <property type="interactions" value="386"/>
</dbReference>
<dbReference type="IntAct" id="Q0E9G3">
    <property type="interactions" value="8"/>
</dbReference>
<dbReference type="STRING" id="7227.FBpp0087975"/>
<dbReference type="iPTMnet" id="Q0E9G3"/>
<dbReference type="PaxDb" id="7227-FBpp0087974"/>
<dbReference type="DNASU" id="35730"/>
<dbReference type="EnsemblMetazoa" id="FBtr0088900">
    <property type="protein sequence ID" value="FBpp0087974"/>
    <property type="gene ID" value="FBgn0033224"/>
</dbReference>
<dbReference type="EnsemblMetazoa" id="FBtr0088901">
    <property type="protein sequence ID" value="FBpp0087975"/>
    <property type="gene ID" value="FBgn0033224"/>
</dbReference>
<dbReference type="EnsemblMetazoa" id="FBtr0088902">
    <property type="protein sequence ID" value="FBpp0087976"/>
    <property type="gene ID" value="FBgn0033224"/>
</dbReference>
<dbReference type="GeneID" id="35730"/>
<dbReference type="KEGG" id="dme:Dmel_CG1553"/>
<dbReference type="UCSC" id="CG1553-RA">
    <property type="organism name" value="d. melanogaster"/>
</dbReference>
<dbReference type="UCSC" id="CG1553-RB">
    <property type="organism name" value="d. melanogaster"/>
</dbReference>
<dbReference type="AGR" id="FB:FBgn0033224"/>
<dbReference type="CTD" id="35730"/>
<dbReference type="FlyBase" id="FBgn0033224">
    <property type="gene designation" value="Nop17l"/>
</dbReference>
<dbReference type="VEuPathDB" id="VectorBase:FBgn0033224"/>
<dbReference type="eggNOG" id="KOG4356">
    <property type="taxonomic scope" value="Eukaryota"/>
</dbReference>
<dbReference type="GeneTree" id="ENSGT00510000048466"/>
<dbReference type="HOGENOM" id="CLU_012715_0_0_1"/>
<dbReference type="InParanoid" id="Q0E9G3"/>
<dbReference type="OMA" id="CFLNISK"/>
<dbReference type="OrthoDB" id="546764at2759"/>
<dbReference type="PhylomeDB" id="Q0E9G3"/>
<dbReference type="BioGRID-ORCS" id="35730">
    <property type="hits" value="0 hits in 3 CRISPR screens"/>
</dbReference>
<dbReference type="GenomeRNAi" id="35730"/>
<dbReference type="PRO" id="PR:Q0E9G3"/>
<dbReference type="Proteomes" id="UP000000803">
    <property type="component" value="Chromosome 2R"/>
</dbReference>
<dbReference type="Bgee" id="FBgn0033224">
    <property type="expression patterns" value="Expressed in adult midgut enterocyte in digestive tract and 233 other cell types or tissues"/>
</dbReference>
<dbReference type="GO" id="GO:0005737">
    <property type="term" value="C:cytoplasm"/>
    <property type="evidence" value="ECO:0000318"/>
    <property type="project" value="GO_Central"/>
</dbReference>
<dbReference type="GO" id="GO:0008157">
    <property type="term" value="F:protein phosphatase 1 binding"/>
    <property type="evidence" value="ECO:0000353"/>
    <property type="project" value="FlyBase"/>
</dbReference>
<dbReference type="GO" id="GO:0070286">
    <property type="term" value="P:axonemal dynein complex assembly"/>
    <property type="evidence" value="ECO:0007669"/>
    <property type="project" value="UniProtKB-UniRule"/>
</dbReference>
<dbReference type="GO" id="GO:0060285">
    <property type="term" value="P:cilium-dependent cell motility"/>
    <property type="evidence" value="ECO:0007669"/>
    <property type="project" value="UniProtKB-UniRule"/>
</dbReference>
<dbReference type="HAMAP" id="MF_03069">
    <property type="entry name" value="Kintoun"/>
    <property type="match status" value="1"/>
</dbReference>
<dbReference type="InterPro" id="IPR034727">
    <property type="entry name" value="Kintoun"/>
</dbReference>
<dbReference type="InterPro" id="IPR050734">
    <property type="entry name" value="PIH1/Kintoun_subfamily"/>
</dbReference>
<dbReference type="InterPro" id="IPR012981">
    <property type="entry name" value="PIH1_N"/>
</dbReference>
<dbReference type="InterPro" id="IPR041442">
    <property type="entry name" value="PIH1D1/2/3_CS-like"/>
</dbReference>
<dbReference type="PANTHER" id="PTHR22997">
    <property type="entry name" value="PIH1 DOMAIN-CONTAINING PROTEIN 1"/>
    <property type="match status" value="1"/>
</dbReference>
<dbReference type="PANTHER" id="PTHR22997:SF3">
    <property type="entry name" value="PROTEIN KINTOUN"/>
    <property type="match status" value="1"/>
</dbReference>
<dbReference type="Pfam" id="PF08190">
    <property type="entry name" value="PIH1"/>
    <property type="match status" value="1"/>
</dbReference>
<dbReference type="Pfam" id="PF18201">
    <property type="entry name" value="PIH1_CS"/>
    <property type="match status" value="1"/>
</dbReference>
<organism>
    <name type="scientific">Drosophila melanogaster</name>
    <name type="common">Fruit fly</name>
    <dbReference type="NCBI Taxonomy" id="7227"/>
    <lineage>
        <taxon>Eukaryota</taxon>
        <taxon>Metazoa</taxon>
        <taxon>Ecdysozoa</taxon>
        <taxon>Arthropoda</taxon>
        <taxon>Hexapoda</taxon>
        <taxon>Insecta</taxon>
        <taxon>Pterygota</taxon>
        <taxon>Neoptera</taxon>
        <taxon>Endopterygota</taxon>
        <taxon>Diptera</taxon>
        <taxon>Brachycera</taxon>
        <taxon>Muscomorpha</taxon>
        <taxon>Ephydroidea</taxon>
        <taxon>Drosophilidae</taxon>
        <taxon>Drosophila</taxon>
        <taxon>Sophophora</taxon>
    </lineage>
</organism>
<protein>
    <recommendedName>
        <fullName evidence="1">Protein kintoun</fullName>
    </recommendedName>
    <alternativeName>
        <fullName evidence="1">Dynein assembly factor 2, axonemal homolog</fullName>
    </alternativeName>
    <alternativeName>
        <fullName evidence="1">PP1-interacting protein 20</fullName>
    </alternativeName>
</protein>
<accession>Q0E9G3</accession>
<accession>C7LA99</accession>
<accession>E2QC75</accession>
<accession>Q8T8Q3</accession>
<proteinExistence type="evidence at protein level"/>
<feature type="chain" id="PRO_0000365807" description="Protein kintoun">
    <location>
        <begin position="1"/>
        <end position="834"/>
    </location>
</feature>
<feature type="region of interest" description="Disordered" evidence="2">
    <location>
        <begin position="214"/>
        <end position="239"/>
    </location>
</feature>
<feature type="region of interest" description="Disordered" evidence="2">
    <location>
        <begin position="374"/>
        <end position="415"/>
    </location>
</feature>
<feature type="region of interest" description="Disordered" evidence="2">
    <location>
        <begin position="547"/>
        <end position="669"/>
    </location>
</feature>
<feature type="region of interest" description="Disordered" evidence="2">
    <location>
        <begin position="759"/>
        <end position="834"/>
    </location>
</feature>
<feature type="compositionally biased region" description="Acidic residues" evidence="2">
    <location>
        <begin position="389"/>
        <end position="398"/>
    </location>
</feature>
<feature type="compositionally biased region" description="Basic and acidic residues" evidence="2">
    <location>
        <begin position="552"/>
        <end position="571"/>
    </location>
</feature>
<feature type="compositionally biased region" description="Acidic residues" evidence="2">
    <location>
        <begin position="582"/>
        <end position="596"/>
    </location>
</feature>
<feature type="compositionally biased region" description="Low complexity" evidence="2">
    <location>
        <begin position="597"/>
        <end position="607"/>
    </location>
</feature>
<feature type="compositionally biased region" description="Basic residues" evidence="2">
    <location>
        <begin position="608"/>
        <end position="619"/>
    </location>
</feature>
<feature type="compositionally biased region" description="Basic residues" evidence="2">
    <location>
        <begin position="759"/>
        <end position="773"/>
    </location>
</feature>
<feature type="compositionally biased region" description="Basic and acidic residues" evidence="2">
    <location>
        <begin position="785"/>
        <end position="798"/>
    </location>
</feature>
<feature type="modified residue" description="Phosphoserine" evidence="4">
    <location>
        <position position="378"/>
    </location>
</feature>
<feature type="modified residue" description="Phosphoserine" evidence="4">
    <location>
        <position position="777"/>
    </location>
</feature>
<feature type="sequence conflict" description="In Ref. 5; ACV21069." evidence="5" ref="5">
    <original>M</original>
    <variation>I</variation>
    <location>
        <position position="160"/>
    </location>
</feature>
<feature type="sequence conflict" description="In Ref. 4; AAL68384." evidence="5" ref="4">
    <original>H</original>
    <variation>R</variation>
    <location>
        <position position="539"/>
    </location>
</feature>
<reference key="1">
    <citation type="journal article" date="2006" name="J. Mol. Biol.">
        <title>Towards a comprehensive analysis of the protein phosphatase 1 interactome in Drosophila.</title>
        <authorList>
            <person name="Bennett D."/>
            <person name="Lyulcheva E."/>
            <person name="Alphey L."/>
        </authorList>
    </citation>
    <scope>NUCLEOTIDE SEQUENCE [MRNA]</scope>
    <scope>INTERACTION WITH PP1ALPHA-96A; PP1-87B; PP1-13C AND FLW</scope>
</reference>
<reference key="2">
    <citation type="journal article" date="2000" name="Science">
        <title>The genome sequence of Drosophila melanogaster.</title>
        <authorList>
            <person name="Adams M.D."/>
            <person name="Celniker S.E."/>
            <person name="Holt R.A."/>
            <person name="Evans C.A."/>
            <person name="Gocayne J.D."/>
            <person name="Amanatides P.G."/>
            <person name="Scherer S.E."/>
            <person name="Li P.W."/>
            <person name="Hoskins R.A."/>
            <person name="Galle R.F."/>
            <person name="George R.A."/>
            <person name="Lewis S.E."/>
            <person name="Richards S."/>
            <person name="Ashburner M."/>
            <person name="Henderson S.N."/>
            <person name="Sutton G.G."/>
            <person name="Wortman J.R."/>
            <person name="Yandell M.D."/>
            <person name="Zhang Q."/>
            <person name="Chen L.X."/>
            <person name="Brandon R.C."/>
            <person name="Rogers Y.-H.C."/>
            <person name="Blazej R.G."/>
            <person name="Champe M."/>
            <person name="Pfeiffer B.D."/>
            <person name="Wan K.H."/>
            <person name="Doyle C."/>
            <person name="Baxter E.G."/>
            <person name="Helt G."/>
            <person name="Nelson C.R."/>
            <person name="Miklos G.L.G."/>
            <person name="Abril J.F."/>
            <person name="Agbayani A."/>
            <person name="An H.-J."/>
            <person name="Andrews-Pfannkoch C."/>
            <person name="Baldwin D."/>
            <person name="Ballew R.M."/>
            <person name="Basu A."/>
            <person name="Baxendale J."/>
            <person name="Bayraktaroglu L."/>
            <person name="Beasley E.M."/>
            <person name="Beeson K.Y."/>
            <person name="Benos P.V."/>
            <person name="Berman B.P."/>
            <person name="Bhandari D."/>
            <person name="Bolshakov S."/>
            <person name="Borkova D."/>
            <person name="Botchan M.R."/>
            <person name="Bouck J."/>
            <person name="Brokstein P."/>
            <person name="Brottier P."/>
            <person name="Burtis K.C."/>
            <person name="Busam D.A."/>
            <person name="Butler H."/>
            <person name="Cadieu E."/>
            <person name="Center A."/>
            <person name="Chandra I."/>
            <person name="Cherry J.M."/>
            <person name="Cawley S."/>
            <person name="Dahlke C."/>
            <person name="Davenport L.B."/>
            <person name="Davies P."/>
            <person name="de Pablos B."/>
            <person name="Delcher A."/>
            <person name="Deng Z."/>
            <person name="Mays A.D."/>
            <person name="Dew I."/>
            <person name="Dietz S.M."/>
            <person name="Dodson K."/>
            <person name="Doup L.E."/>
            <person name="Downes M."/>
            <person name="Dugan-Rocha S."/>
            <person name="Dunkov B.C."/>
            <person name="Dunn P."/>
            <person name="Durbin K.J."/>
            <person name="Evangelista C.C."/>
            <person name="Ferraz C."/>
            <person name="Ferriera S."/>
            <person name="Fleischmann W."/>
            <person name="Fosler C."/>
            <person name="Gabrielian A.E."/>
            <person name="Garg N.S."/>
            <person name="Gelbart W.M."/>
            <person name="Glasser K."/>
            <person name="Glodek A."/>
            <person name="Gong F."/>
            <person name="Gorrell J.H."/>
            <person name="Gu Z."/>
            <person name="Guan P."/>
            <person name="Harris M."/>
            <person name="Harris N.L."/>
            <person name="Harvey D.A."/>
            <person name="Heiman T.J."/>
            <person name="Hernandez J.R."/>
            <person name="Houck J."/>
            <person name="Hostin D."/>
            <person name="Houston K.A."/>
            <person name="Howland T.J."/>
            <person name="Wei M.-H."/>
            <person name="Ibegwam C."/>
            <person name="Jalali M."/>
            <person name="Kalush F."/>
            <person name="Karpen G.H."/>
            <person name="Ke Z."/>
            <person name="Kennison J.A."/>
            <person name="Ketchum K.A."/>
            <person name="Kimmel B.E."/>
            <person name="Kodira C.D."/>
            <person name="Kraft C.L."/>
            <person name="Kravitz S."/>
            <person name="Kulp D."/>
            <person name="Lai Z."/>
            <person name="Lasko P."/>
            <person name="Lei Y."/>
            <person name="Levitsky A.A."/>
            <person name="Li J.H."/>
            <person name="Li Z."/>
            <person name="Liang Y."/>
            <person name="Lin X."/>
            <person name="Liu X."/>
            <person name="Mattei B."/>
            <person name="McIntosh T.C."/>
            <person name="McLeod M.P."/>
            <person name="McPherson D."/>
            <person name="Merkulov G."/>
            <person name="Milshina N.V."/>
            <person name="Mobarry C."/>
            <person name="Morris J."/>
            <person name="Moshrefi A."/>
            <person name="Mount S.M."/>
            <person name="Moy M."/>
            <person name="Murphy B."/>
            <person name="Murphy L."/>
            <person name="Muzny D.M."/>
            <person name="Nelson D.L."/>
            <person name="Nelson D.R."/>
            <person name="Nelson K.A."/>
            <person name="Nixon K."/>
            <person name="Nusskern D.R."/>
            <person name="Pacleb J.M."/>
            <person name="Palazzolo M."/>
            <person name="Pittman G.S."/>
            <person name="Pan S."/>
            <person name="Pollard J."/>
            <person name="Puri V."/>
            <person name="Reese M.G."/>
            <person name="Reinert K."/>
            <person name="Remington K."/>
            <person name="Saunders R.D.C."/>
            <person name="Scheeler F."/>
            <person name="Shen H."/>
            <person name="Shue B.C."/>
            <person name="Siden-Kiamos I."/>
            <person name="Simpson M."/>
            <person name="Skupski M.P."/>
            <person name="Smith T.J."/>
            <person name="Spier E."/>
            <person name="Spradling A.C."/>
            <person name="Stapleton M."/>
            <person name="Strong R."/>
            <person name="Sun E."/>
            <person name="Svirskas R."/>
            <person name="Tector C."/>
            <person name="Turner R."/>
            <person name="Venter E."/>
            <person name="Wang A.H."/>
            <person name="Wang X."/>
            <person name="Wang Z.-Y."/>
            <person name="Wassarman D.A."/>
            <person name="Weinstock G.M."/>
            <person name="Weissenbach J."/>
            <person name="Williams S.M."/>
            <person name="Woodage T."/>
            <person name="Worley K.C."/>
            <person name="Wu D."/>
            <person name="Yang S."/>
            <person name="Yao Q.A."/>
            <person name="Ye J."/>
            <person name="Yeh R.-F."/>
            <person name="Zaveri J.S."/>
            <person name="Zhan M."/>
            <person name="Zhang G."/>
            <person name="Zhao Q."/>
            <person name="Zheng L."/>
            <person name="Zheng X.H."/>
            <person name="Zhong F.N."/>
            <person name="Zhong W."/>
            <person name="Zhou X."/>
            <person name="Zhu S.C."/>
            <person name="Zhu X."/>
            <person name="Smith H.O."/>
            <person name="Gibbs R.A."/>
            <person name="Myers E.W."/>
            <person name="Rubin G.M."/>
            <person name="Venter J.C."/>
        </authorList>
    </citation>
    <scope>NUCLEOTIDE SEQUENCE [LARGE SCALE GENOMIC DNA]</scope>
    <source>
        <strain>Berkeley</strain>
    </source>
</reference>
<reference key="3">
    <citation type="journal article" date="2002" name="Genome Biol.">
        <title>Annotation of the Drosophila melanogaster euchromatic genome: a systematic review.</title>
        <authorList>
            <person name="Misra S."/>
            <person name="Crosby M.A."/>
            <person name="Mungall C.J."/>
            <person name="Matthews B.B."/>
            <person name="Campbell K.S."/>
            <person name="Hradecky P."/>
            <person name="Huang Y."/>
            <person name="Kaminker J.S."/>
            <person name="Millburn G.H."/>
            <person name="Prochnik S.E."/>
            <person name="Smith C.D."/>
            <person name="Tupy J.L."/>
            <person name="Whitfield E.J."/>
            <person name="Bayraktaroglu L."/>
            <person name="Berman B.P."/>
            <person name="Bettencourt B.R."/>
            <person name="Celniker S.E."/>
            <person name="de Grey A.D.N.J."/>
            <person name="Drysdale R.A."/>
            <person name="Harris N.L."/>
            <person name="Richter J."/>
            <person name="Russo S."/>
            <person name="Schroeder A.J."/>
            <person name="Shu S.Q."/>
            <person name="Stapleton M."/>
            <person name="Yamada C."/>
            <person name="Ashburner M."/>
            <person name="Gelbart W.M."/>
            <person name="Rubin G.M."/>
            <person name="Lewis S.E."/>
        </authorList>
    </citation>
    <scope>GENOME REANNOTATION</scope>
    <source>
        <strain>Berkeley</strain>
    </source>
</reference>
<reference key="4">
    <citation type="journal article" date="2002" name="Genome Biol.">
        <title>A Drosophila full-length cDNA resource.</title>
        <authorList>
            <person name="Stapleton M."/>
            <person name="Carlson J.W."/>
            <person name="Brokstein P."/>
            <person name="Yu C."/>
            <person name="Champe M."/>
            <person name="George R.A."/>
            <person name="Guarin H."/>
            <person name="Kronmiller B."/>
            <person name="Pacleb J.M."/>
            <person name="Park S."/>
            <person name="Wan K.H."/>
            <person name="Rubin G.M."/>
            <person name="Celniker S.E."/>
        </authorList>
    </citation>
    <scope>NUCLEOTIDE SEQUENCE [LARGE SCALE MRNA]</scope>
    <source>
        <strain>Berkeley</strain>
        <tissue>Embryo</tissue>
    </source>
</reference>
<reference key="5">
    <citation type="submission" date="2012-03" db="EMBL/GenBank/DDBJ databases">
        <authorList>
            <person name="Carlson J."/>
            <person name="Booth B."/>
            <person name="Frise E."/>
            <person name="Park S."/>
            <person name="Wan K."/>
            <person name="Yu C."/>
            <person name="Celniker S."/>
        </authorList>
    </citation>
    <scope>NUCLEOTIDE SEQUENCE [LARGE SCALE MRNA]</scope>
</reference>
<reference key="6">
    <citation type="journal article" date="2008" name="J. Proteome Res.">
        <title>Phosphoproteome analysis of Drosophila melanogaster embryos.</title>
        <authorList>
            <person name="Zhai B."/>
            <person name="Villen J."/>
            <person name="Beausoleil S.A."/>
            <person name="Mintseris J."/>
            <person name="Gygi S.P."/>
        </authorList>
    </citation>
    <scope>PHOSPHORYLATION [LARGE SCALE ANALYSIS] AT SER-378 AND SER-777</scope>
    <scope>IDENTIFICATION BY MASS SPECTROMETRY</scope>
    <source>
        <tissue>Embryo</tissue>
    </source>
</reference>
<comment type="function">
    <text evidence="1">Required for cytoplasmic pre-assembly of axonemal dyneins, thereby playing a central role in motility in cilia and flagella. Involved in pre-assembly of dynein arm complexes in the cytoplasm before intraflagellar transport loads them for the ciliary compartment.</text>
</comment>
<comment type="subunit">
    <text evidence="1 3">Interacts with Pp1alpha-96A, Pp1-87B, Pp1-13C and flw.</text>
</comment>
<comment type="interaction">
    <interactant intactId="EBI-150380">
        <id>Q0E9G3</id>
    </interactant>
    <interactant intactId="EBI-869621">
        <id>P48462</id>
        <label>flw</label>
    </interactant>
    <organismsDiffer>false</organismsDiffer>
    <experiments>3</experiments>
</comment>
<comment type="interaction">
    <interactant intactId="EBI-150380">
        <id>Q0E9G3</id>
    </interactant>
    <interactant intactId="EBI-157144">
        <id>Q05547</id>
        <label>Pp1-13C</label>
    </interactant>
    <organismsDiffer>false</organismsDiffer>
    <experiments>2</experiments>
</comment>
<comment type="interaction">
    <interactant intactId="EBI-150380">
        <id>Q0E9G3</id>
    </interactant>
    <interactant intactId="EBI-152633">
        <id>P12982</id>
        <label>Pp1-87B</label>
    </interactant>
    <organismsDiffer>false</organismsDiffer>
    <experiments>3</experiments>
</comment>
<comment type="interaction">
    <interactant intactId="EBI-150380">
        <id>Q0E9G3</id>
    </interactant>
    <interactant intactId="EBI-91997">
        <id>P48461</id>
        <label>Pp1alpha-96A</label>
    </interactant>
    <organismsDiffer>false</organismsDiffer>
    <experiments>4</experiments>
</comment>
<comment type="subcellular location">
    <subcellularLocation>
        <location evidence="1">Cytoplasm</location>
    </subcellularLocation>
</comment>
<comment type="similarity">
    <text evidence="1">Belongs to the PIH1 family. Kintoun subfamily.</text>
</comment>
<name>KTU_DROME</name>